<dbReference type="EC" id="6.1.1.4" evidence="1"/>
<dbReference type="EMBL" id="AE001273">
    <property type="protein sequence ID" value="AAC67801.1"/>
    <property type="molecule type" value="Genomic_DNA"/>
</dbReference>
<dbReference type="PIR" id="C71544">
    <property type="entry name" value="C71544"/>
</dbReference>
<dbReference type="RefSeq" id="NP_219713.1">
    <property type="nucleotide sequence ID" value="NC_000117.1"/>
</dbReference>
<dbReference type="RefSeq" id="WP_010725124.1">
    <property type="nucleotide sequence ID" value="NC_000117.1"/>
</dbReference>
<dbReference type="SMR" id="O84211"/>
<dbReference type="FunCoup" id="O84211">
    <property type="interactions" value="283"/>
</dbReference>
<dbReference type="STRING" id="272561.CT_209"/>
<dbReference type="EnsemblBacteria" id="AAC67801">
    <property type="protein sequence ID" value="AAC67801"/>
    <property type="gene ID" value="CT_209"/>
</dbReference>
<dbReference type="GeneID" id="884917"/>
<dbReference type="KEGG" id="ctr:CT_209"/>
<dbReference type="PATRIC" id="fig|272561.5.peg.224"/>
<dbReference type="HOGENOM" id="CLU_004427_0_0_0"/>
<dbReference type="InParanoid" id="O84211"/>
<dbReference type="OrthoDB" id="9810365at2"/>
<dbReference type="Proteomes" id="UP000000431">
    <property type="component" value="Chromosome"/>
</dbReference>
<dbReference type="GO" id="GO:0005829">
    <property type="term" value="C:cytosol"/>
    <property type="evidence" value="ECO:0000318"/>
    <property type="project" value="GO_Central"/>
</dbReference>
<dbReference type="GO" id="GO:0002161">
    <property type="term" value="F:aminoacyl-tRNA deacylase activity"/>
    <property type="evidence" value="ECO:0007669"/>
    <property type="project" value="InterPro"/>
</dbReference>
<dbReference type="GO" id="GO:0005524">
    <property type="term" value="F:ATP binding"/>
    <property type="evidence" value="ECO:0007669"/>
    <property type="project" value="UniProtKB-UniRule"/>
</dbReference>
<dbReference type="GO" id="GO:0004823">
    <property type="term" value="F:leucine-tRNA ligase activity"/>
    <property type="evidence" value="ECO:0000318"/>
    <property type="project" value="GO_Central"/>
</dbReference>
<dbReference type="GO" id="GO:0006429">
    <property type="term" value="P:leucyl-tRNA aminoacylation"/>
    <property type="evidence" value="ECO:0000318"/>
    <property type="project" value="GO_Central"/>
</dbReference>
<dbReference type="CDD" id="cd07958">
    <property type="entry name" value="Anticodon_Ia_Leu_BEm"/>
    <property type="match status" value="1"/>
</dbReference>
<dbReference type="CDD" id="cd00812">
    <property type="entry name" value="LeuRS_core"/>
    <property type="match status" value="1"/>
</dbReference>
<dbReference type="FunFam" id="1.10.730.10:FF:000002">
    <property type="entry name" value="Leucine--tRNA ligase"/>
    <property type="match status" value="1"/>
</dbReference>
<dbReference type="FunFam" id="3.40.50.620:FF:000056">
    <property type="entry name" value="Leucine--tRNA ligase"/>
    <property type="match status" value="1"/>
</dbReference>
<dbReference type="FunFam" id="3.40.50.620:FF:000077">
    <property type="entry name" value="Leucine--tRNA ligase"/>
    <property type="match status" value="1"/>
</dbReference>
<dbReference type="Gene3D" id="3.40.50.620">
    <property type="entry name" value="HUPs"/>
    <property type="match status" value="2"/>
</dbReference>
<dbReference type="Gene3D" id="1.10.730.10">
    <property type="entry name" value="Isoleucyl-tRNA Synthetase, Domain 1"/>
    <property type="match status" value="1"/>
</dbReference>
<dbReference type="HAMAP" id="MF_00049_B">
    <property type="entry name" value="Leu_tRNA_synth_B"/>
    <property type="match status" value="1"/>
</dbReference>
<dbReference type="InterPro" id="IPR001412">
    <property type="entry name" value="aa-tRNA-synth_I_CS"/>
</dbReference>
<dbReference type="InterPro" id="IPR002302">
    <property type="entry name" value="Leu-tRNA-ligase"/>
</dbReference>
<dbReference type="InterPro" id="IPR025709">
    <property type="entry name" value="Leu_tRNA-synth_edit"/>
</dbReference>
<dbReference type="InterPro" id="IPR013155">
    <property type="entry name" value="M/V/L/I-tRNA-synth_anticd-bd"/>
</dbReference>
<dbReference type="InterPro" id="IPR015413">
    <property type="entry name" value="Methionyl/Leucyl_tRNA_Synth"/>
</dbReference>
<dbReference type="InterPro" id="IPR014729">
    <property type="entry name" value="Rossmann-like_a/b/a_fold"/>
</dbReference>
<dbReference type="InterPro" id="IPR009080">
    <property type="entry name" value="tRNAsynth_Ia_anticodon-bd"/>
</dbReference>
<dbReference type="InterPro" id="IPR009008">
    <property type="entry name" value="Val/Leu/Ile-tRNA-synth_edit"/>
</dbReference>
<dbReference type="NCBIfam" id="TIGR00396">
    <property type="entry name" value="leuS_bact"/>
    <property type="match status" value="1"/>
</dbReference>
<dbReference type="PANTHER" id="PTHR43740:SF2">
    <property type="entry name" value="LEUCINE--TRNA LIGASE, MITOCHONDRIAL"/>
    <property type="match status" value="1"/>
</dbReference>
<dbReference type="PANTHER" id="PTHR43740">
    <property type="entry name" value="LEUCYL-TRNA SYNTHETASE"/>
    <property type="match status" value="1"/>
</dbReference>
<dbReference type="Pfam" id="PF08264">
    <property type="entry name" value="Anticodon_1"/>
    <property type="match status" value="1"/>
</dbReference>
<dbReference type="Pfam" id="PF13603">
    <property type="entry name" value="tRNA-synt_1_2"/>
    <property type="match status" value="1"/>
</dbReference>
<dbReference type="Pfam" id="PF09334">
    <property type="entry name" value="tRNA-synt_1g"/>
    <property type="match status" value="1"/>
</dbReference>
<dbReference type="PRINTS" id="PR00985">
    <property type="entry name" value="TRNASYNTHLEU"/>
</dbReference>
<dbReference type="SUPFAM" id="SSF47323">
    <property type="entry name" value="Anticodon-binding domain of a subclass of class I aminoacyl-tRNA synthetases"/>
    <property type="match status" value="1"/>
</dbReference>
<dbReference type="SUPFAM" id="SSF52374">
    <property type="entry name" value="Nucleotidylyl transferase"/>
    <property type="match status" value="1"/>
</dbReference>
<dbReference type="SUPFAM" id="SSF50677">
    <property type="entry name" value="ValRS/IleRS/LeuRS editing domain"/>
    <property type="match status" value="1"/>
</dbReference>
<dbReference type="PROSITE" id="PS00178">
    <property type="entry name" value="AA_TRNA_LIGASE_I"/>
    <property type="match status" value="1"/>
</dbReference>
<organism>
    <name type="scientific">Chlamydia trachomatis serovar D (strain ATCC VR-885 / DSM 19411 / UW-3/Cx)</name>
    <dbReference type="NCBI Taxonomy" id="272561"/>
    <lineage>
        <taxon>Bacteria</taxon>
        <taxon>Pseudomonadati</taxon>
        <taxon>Chlamydiota</taxon>
        <taxon>Chlamydiia</taxon>
        <taxon>Chlamydiales</taxon>
        <taxon>Chlamydiaceae</taxon>
        <taxon>Chlamydia/Chlamydophila group</taxon>
        <taxon>Chlamydia</taxon>
    </lineage>
</organism>
<feature type="chain" id="PRO_0000152000" description="Leucine--tRNA ligase">
    <location>
        <begin position="1"/>
        <end position="819"/>
    </location>
</feature>
<feature type="short sequence motif" description="'HIGH' region">
    <location>
        <begin position="40"/>
        <end position="51"/>
    </location>
</feature>
<feature type="short sequence motif" description="'KMSKS' region">
    <location>
        <begin position="600"/>
        <end position="604"/>
    </location>
</feature>
<feature type="binding site" evidence="1">
    <location>
        <position position="603"/>
    </location>
    <ligand>
        <name>ATP</name>
        <dbReference type="ChEBI" id="CHEBI:30616"/>
    </ligand>
</feature>
<keyword id="KW-0030">Aminoacyl-tRNA synthetase</keyword>
<keyword id="KW-0067">ATP-binding</keyword>
<keyword id="KW-0963">Cytoplasm</keyword>
<keyword id="KW-0436">Ligase</keyword>
<keyword id="KW-0547">Nucleotide-binding</keyword>
<keyword id="KW-0648">Protein biosynthesis</keyword>
<keyword id="KW-1185">Reference proteome</keyword>
<evidence type="ECO:0000255" key="1">
    <source>
        <dbReference type="HAMAP-Rule" id="MF_00049"/>
    </source>
</evidence>
<accession>O84211</accession>
<proteinExistence type="inferred from homology"/>
<comment type="catalytic activity">
    <reaction evidence="1">
        <text>tRNA(Leu) + L-leucine + ATP = L-leucyl-tRNA(Leu) + AMP + diphosphate</text>
        <dbReference type="Rhea" id="RHEA:11688"/>
        <dbReference type="Rhea" id="RHEA-COMP:9613"/>
        <dbReference type="Rhea" id="RHEA-COMP:9622"/>
        <dbReference type="ChEBI" id="CHEBI:30616"/>
        <dbReference type="ChEBI" id="CHEBI:33019"/>
        <dbReference type="ChEBI" id="CHEBI:57427"/>
        <dbReference type="ChEBI" id="CHEBI:78442"/>
        <dbReference type="ChEBI" id="CHEBI:78494"/>
        <dbReference type="ChEBI" id="CHEBI:456215"/>
        <dbReference type="EC" id="6.1.1.4"/>
    </reaction>
</comment>
<comment type="subcellular location">
    <subcellularLocation>
        <location evidence="1">Cytoplasm</location>
    </subcellularLocation>
</comment>
<comment type="similarity">
    <text evidence="1">Belongs to the class-I aminoacyl-tRNA synthetase family.</text>
</comment>
<gene>
    <name evidence="1" type="primary">leuS</name>
    <name type="ordered locus">CT_209</name>
</gene>
<sequence length="819" mass="92903">MRYDPGLIEEKWQKFWENEQVFKAEEDETKTKYYVLDMFPYPSGAGLHVGHLIGYTATDIVARYKRAQGFSVLHPMGWDSFGLPAEQYAIRTGTHPRETTEKNIANFKKQLTAMGFSYDESREFATSDPEYYKWTQKLFLILYEKGLAYMADMAVNYCPELGTVLSNEEIENGFSVDGGYPVERRMLRQWVLRITAFADQLLEGLDELDWPESVKQLQKNWIGKSSGASVNFATEHGVIEVFTTRPDTLIGVSFLALAPEHPLVDLLTSDEQKAVVAQYIKETQSKSERDRISEMKTKSGVFTGSYAKHPVTHKLIPIWIADYVLIGFGSGAVMGVPAHDERDLLFAEQFNLPVVSVLNKEGVCINSCCEGFHLDGLSGEEAKQYVINFLEENHLGAAKIAYKLRDWLFSRQRYWGEPIPIIHFEDGSCRPLRDYELPLLPPEIQDYRPEGVGQGPLAKVREWVQVFDTETQRAGKRETHTMPQWAGSCWYYLRFCDAHNSAAPWAKEKEQYWMPVDLYIGGAEHAVLHLLYARFWHQVFYEAGIVSTPEPFKKLVNQGLVLATSYRIPGKGYIYPEIAKEENGKWVAPSGEELDVRQEKMSKSKLNGVDPQILIDEFGADAVRMYAMFSGPLDKNKLWSNQGVAGCRRFLNRFYEMVSSDRVKEDNNFEGLSLAHKLVQRVTDAIEKLSLNTIPSSFMEFINDFVKLAVYPKSAVEMAVRALAPIAPHISEELWVLLGNSPGVQKSGWPSVLPEYLEGQTVTIVVQVNGKLRARLDIMKDASKEEVLALARESASKYLEGCEVKKAIFVPARLVNFVV</sequence>
<protein>
    <recommendedName>
        <fullName evidence="1">Leucine--tRNA ligase</fullName>
        <ecNumber evidence="1">6.1.1.4</ecNumber>
    </recommendedName>
    <alternativeName>
        <fullName evidence="1">Leucyl-tRNA synthetase</fullName>
        <shortName evidence="1">LeuRS</shortName>
    </alternativeName>
</protein>
<reference key="1">
    <citation type="journal article" date="1998" name="Science">
        <title>Genome sequence of an obligate intracellular pathogen of humans: Chlamydia trachomatis.</title>
        <authorList>
            <person name="Stephens R.S."/>
            <person name="Kalman S."/>
            <person name="Lammel C.J."/>
            <person name="Fan J."/>
            <person name="Marathe R."/>
            <person name="Aravind L."/>
            <person name="Mitchell W.P."/>
            <person name="Olinger L."/>
            <person name="Tatusov R.L."/>
            <person name="Zhao Q."/>
            <person name="Koonin E.V."/>
            <person name="Davis R.W."/>
        </authorList>
    </citation>
    <scope>NUCLEOTIDE SEQUENCE [LARGE SCALE GENOMIC DNA]</scope>
    <source>
        <strain>ATCC VR-885 / DSM 19411 / UW-3/Cx</strain>
    </source>
</reference>
<name>SYL_CHLTR</name>